<proteinExistence type="evidence at protein level"/>
<keyword id="KW-0002">3D-structure</keyword>
<keyword id="KW-0025">Alternative splicing</keyword>
<keyword id="KW-0968">Cytoplasmic vesicle</keyword>
<keyword id="KW-0903">Direct protein sequencing</keyword>
<keyword id="KW-1015">Disulfide bond</keyword>
<keyword id="KW-0325">Glycoprotein</keyword>
<keyword id="KW-0378">Hydrolase</keyword>
<keyword id="KW-0458">Lysosome</keyword>
<keyword id="KW-0645">Protease</keyword>
<keyword id="KW-1267">Proteomics identification</keyword>
<keyword id="KW-1185">Reference proteome</keyword>
<keyword id="KW-0964">Secreted</keyword>
<keyword id="KW-0732">Signal</keyword>
<keyword id="KW-0788">Thiol protease</keyword>
<keyword id="KW-0865">Zymogen</keyword>
<evidence type="ECO:0000250" key="1"/>
<evidence type="ECO:0000255" key="2"/>
<evidence type="ECO:0000255" key="3">
    <source>
        <dbReference type="PROSITE-ProRule" id="PRU10088"/>
    </source>
</evidence>
<evidence type="ECO:0000255" key="4">
    <source>
        <dbReference type="PROSITE-ProRule" id="PRU10089"/>
    </source>
</evidence>
<evidence type="ECO:0000255" key="5">
    <source>
        <dbReference type="PROSITE-ProRule" id="PRU10090"/>
    </source>
</evidence>
<evidence type="ECO:0000269" key="6">
    <source>
    </source>
</evidence>
<evidence type="ECO:0000269" key="7">
    <source>
    </source>
</evidence>
<evidence type="ECO:0000269" key="8">
    <source>
    </source>
</evidence>
<evidence type="ECO:0000269" key="9">
    <source>
    </source>
</evidence>
<evidence type="ECO:0000269" key="10">
    <source>
    </source>
</evidence>
<evidence type="ECO:0000269" key="11">
    <source>
    </source>
</evidence>
<evidence type="ECO:0000269" key="12">
    <source>
    </source>
</evidence>
<evidence type="ECO:0000269" key="13">
    <source>
    </source>
</evidence>
<evidence type="ECO:0000269" key="14">
    <source ref="5"/>
</evidence>
<evidence type="ECO:0000303" key="15">
    <source>
    </source>
</evidence>
<evidence type="ECO:0000305" key="16"/>
<evidence type="ECO:0007829" key="17">
    <source>
        <dbReference type="PDB" id="2C0Y"/>
    </source>
</evidence>
<evidence type="ECO:0007829" key="18">
    <source>
        <dbReference type="PDB" id="2HH5"/>
    </source>
</evidence>
<evidence type="ECO:0007829" key="19">
    <source>
        <dbReference type="PDB" id="3OVX"/>
    </source>
</evidence>
<evidence type="ECO:0007829" key="20">
    <source>
        <dbReference type="PDB" id="5QCA"/>
    </source>
</evidence>
<evidence type="ECO:0007829" key="21">
    <source>
        <dbReference type="PDB" id="9GJ2"/>
    </source>
</evidence>
<reference key="1">
    <citation type="journal article" date="1992" name="J. Biol. Chem.">
        <title>Molecular cloning and expression of human alveolar macrophage cathepsin S, an elastinolytic cysteine protease.</title>
        <authorList>
            <person name="Shi G.-P."/>
            <person name="Munger J.S."/>
            <person name="Meara J.P."/>
            <person name="Rich D.H."/>
            <person name="Chapman H.A."/>
        </authorList>
    </citation>
    <scope>NUCLEOTIDE SEQUENCE [MRNA] (ISOFORM 1)</scope>
    <scope>VARIANT THR-161</scope>
    <source>
        <tissue>Alveolar macrophage</tissue>
    </source>
</reference>
<reference key="2">
    <citation type="journal article" date="1992" name="J. Biol. Chem.">
        <title>Phylogenetic conservation of cysteine proteinases. Cloning and expression of a cDNA coding for human cathepsin S.</title>
        <authorList>
            <person name="Wiederanders B."/>
            <person name="Broemme D."/>
            <person name="Kirschke H."/>
            <person name="von Figura K."/>
            <person name="Schmidt B."/>
            <person name="Peters C."/>
        </authorList>
    </citation>
    <scope>NUCLEOTIDE SEQUENCE [MRNA] (ISOFORM 1)</scope>
    <scope>PROTEIN SEQUENCE OF 115-129</scope>
    <scope>SUBCELLULAR LOCATION</scope>
    <source>
        <tissue>Testis</tissue>
    </source>
</reference>
<reference key="3">
    <citation type="submission" date="1995-05" db="EMBL/GenBank/DDBJ databases">
        <authorList>
            <person name="Wiederanders B."/>
            <person name="Broemme D."/>
            <person name="Kirschke H."/>
            <person name="von Figura K."/>
            <person name="Schmidt B."/>
            <person name="Peters C."/>
        </authorList>
    </citation>
    <scope>SEQUENCE REVISION TO 211</scope>
</reference>
<reference key="4">
    <citation type="journal article" date="1994" name="J. Biol. Chem.">
        <title>Human cathepsin S: chromosomal localization, gene structure, and tissue distribution.</title>
        <authorList>
            <person name="Shi G.-P."/>
            <person name="Webb A.C."/>
            <person name="Foster K.E."/>
            <person name="Knoll J.H.M."/>
            <person name="Lemere C.A."/>
            <person name="Munger J.S."/>
            <person name="Chapman H.A."/>
        </authorList>
    </citation>
    <scope>NUCLEOTIDE SEQUENCE [GENOMIC DNA]</scope>
    <scope>VARIANT THR-161</scope>
</reference>
<reference key="5">
    <citation type="submission" date="2004-06" db="EMBL/GenBank/DDBJ databases">
        <title>Cloning of human full open reading frames in Gateway(TM) system entry vector (pDONR201).</title>
        <authorList>
            <person name="Ebert L."/>
            <person name="Schick M."/>
            <person name="Neubert P."/>
            <person name="Schatten R."/>
            <person name="Henze S."/>
            <person name="Korn B."/>
        </authorList>
    </citation>
    <scope>NUCLEOTIDE SEQUENCE [LARGE SCALE MRNA] (ISOFORM 1)</scope>
    <scope>VARIANT TRP-113</scope>
</reference>
<reference key="6">
    <citation type="journal article" date="2004" name="Nat. Genet.">
        <title>Complete sequencing and characterization of 21,243 full-length human cDNAs.</title>
        <authorList>
            <person name="Ota T."/>
            <person name="Suzuki Y."/>
            <person name="Nishikawa T."/>
            <person name="Otsuki T."/>
            <person name="Sugiyama T."/>
            <person name="Irie R."/>
            <person name="Wakamatsu A."/>
            <person name="Hayashi K."/>
            <person name="Sato H."/>
            <person name="Nagai K."/>
            <person name="Kimura K."/>
            <person name="Makita H."/>
            <person name="Sekine M."/>
            <person name="Obayashi M."/>
            <person name="Nishi T."/>
            <person name="Shibahara T."/>
            <person name="Tanaka T."/>
            <person name="Ishii S."/>
            <person name="Yamamoto J."/>
            <person name="Saito K."/>
            <person name="Kawai Y."/>
            <person name="Isono Y."/>
            <person name="Nakamura Y."/>
            <person name="Nagahari K."/>
            <person name="Murakami K."/>
            <person name="Yasuda T."/>
            <person name="Iwayanagi T."/>
            <person name="Wagatsuma M."/>
            <person name="Shiratori A."/>
            <person name="Sudo H."/>
            <person name="Hosoiri T."/>
            <person name="Kaku Y."/>
            <person name="Kodaira H."/>
            <person name="Kondo H."/>
            <person name="Sugawara M."/>
            <person name="Takahashi M."/>
            <person name="Kanda K."/>
            <person name="Yokoi T."/>
            <person name="Furuya T."/>
            <person name="Kikkawa E."/>
            <person name="Omura Y."/>
            <person name="Abe K."/>
            <person name="Kamihara K."/>
            <person name="Katsuta N."/>
            <person name="Sato K."/>
            <person name="Tanikawa M."/>
            <person name="Yamazaki M."/>
            <person name="Ninomiya K."/>
            <person name="Ishibashi T."/>
            <person name="Yamashita H."/>
            <person name="Murakawa K."/>
            <person name="Fujimori K."/>
            <person name="Tanai H."/>
            <person name="Kimata M."/>
            <person name="Watanabe M."/>
            <person name="Hiraoka S."/>
            <person name="Chiba Y."/>
            <person name="Ishida S."/>
            <person name="Ono Y."/>
            <person name="Takiguchi S."/>
            <person name="Watanabe S."/>
            <person name="Yosida M."/>
            <person name="Hotuta T."/>
            <person name="Kusano J."/>
            <person name="Kanehori K."/>
            <person name="Takahashi-Fujii A."/>
            <person name="Hara H."/>
            <person name="Tanase T.-O."/>
            <person name="Nomura Y."/>
            <person name="Togiya S."/>
            <person name="Komai F."/>
            <person name="Hara R."/>
            <person name="Takeuchi K."/>
            <person name="Arita M."/>
            <person name="Imose N."/>
            <person name="Musashino K."/>
            <person name="Yuuki H."/>
            <person name="Oshima A."/>
            <person name="Sasaki N."/>
            <person name="Aotsuka S."/>
            <person name="Yoshikawa Y."/>
            <person name="Matsunawa H."/>
            <person name="Ichihara T."/>
            <person name="Shiohata N."/>
            <person name="Sano S."/>
            <person name="Moriya S."/>
            <person name="Momiyama H."/>
            <person name="Satoh N."/>
            <person name="Takami S."/>
            <person name="Terashima Y."/>
            <person name="Suzuki O."/>
            <person name="Nakagawa S."/>
            <person name="Senoh A."/>
            <person name="Mizoguchi H."/>
            <person name="Goto Y."/>
            <person name="Shimizu F."/>
            <person name="Wakebe H."/>
            <person name="Hishigaki H."/>
            <person name="Watanabe T."/>
            <person name="Sugiyama A."/>
            <person name="Takemoto M."/>
            <person name="Kawakami B."/>
            <person name="Yamazaki M."/>
            <person name="Watanabe K."/>
            <person name="Kumagai A."/>
            <person name="Itakura S."/>
            <person name="Fukuzumi Y."/>
            <person name="Fujimori Y."/>
            <person name="Komiyama M."/>
            <person name="Tashiro H."/>
            <person name="Tanigami A."/>
            <person name="Fujiwara T."/>
            <person name="Ono T."/>
            <person name="Yamada K."/>
            <person name="Fujii Y."/>
            <person name="Ozaki K."/>
            <person name="Hirao M."/>
            <person name="Ohmori Y."/>
            <person name="Kawabata A."/>
            <person name="Hikiji T."/>
            <person name="Kobatake N."/>
            <person name="Inagaki H."/>
            <person name="Ikema Y."/>
            <person name="Okamoto S."/>
            <person name="Okitani R."/>
            <person name="Kawakami T."/>
            <person name="Noguchi S."/>
            <person name="Itoh T."/>
            <person name="Shigeta K."/>
            <person name="Senba T."/>
            <person name="Matsumura K."/>
            <person name="Nakajima Y."/>
            <person name="Mizuno T."/>
            <person name="Morinaga M."/>
            <person name="Sasaki M."/>
            <person name="Togashi T."/>
            <person name="Oyama M."/>
            <person name="Hata H."/>
            <person name="Watanabe M."/>
            <person name="Komatsu T."/>
            <person name="Mizushima-Sugano J."/>
            <person name="Satoh T."/>
            <person name="Shirai Y."/>
            <person name="Takahashi Y."/>
            <person name="Nakagawa K."/>
            <person name="Okumura K."/>
            <person name="Nagase T."/>
            <person name="Nomura N."/>
            <person name="Kikuchi H."/>
            <person name="Masuho Y."/>
            <person name="Yamashita R."/>
            <person name="Nakai K."/>
            <person name="Yada T."/>
            <person name="Nakamura Y."/>
            <person name="Ohara O."/>
            <person name="Isogai T."/>
            <person name="Sugano S."/>
        </authorList>
    </citation>
    <scope>NUCLEOTIDE SEQUENCE [LARGE SCALE MRNA] (ISOFORMS 1 AND 2)</scope>
    <scope>VARIANT TRP-113</scope>
    <source>
        <tissue>Placenta</tissue>
        <tissue>Synovium</tissue>
    </source>
</reference>
<reference key="7">
    <citation type="journal article" date="2006" name="Nature">
        <title>The DNA sequence and biological annotation of human chromosome 1.</title>
        <authorList>
            <person name="Gregory S.G."/>
            <person name="Barlow K.F."/>
            <person name="McLay K.E."/>
            <person name="Kaul R."/>
            <person name="Swarbreck D."/>
            <person name="Dunham A."/>
            <person name="Scott C.E."/>
            <person name="Howe K.L."/>
            <person name="Woodfine K."/>
            <person name="Spencer C.C.A."/>
            <person name="Jones M.C."/>
            <person name="Gillson C."/>
            <person name="Searle S."/>
            <person name="Zhou Y."/>
            <person name="Kokocinski F."/>
            <person name="McDonald L."/>
            <person name="Evans R."/>
            <person name="Phillips K."/>
            <person name="Atkinson A."/>
            <person name="Cooper R."/>
            <person name="Jones C."/>
            <person name="Hall R.E."/>
            <person name="Andrews T.D."/>
            <person name="Lloyd C."/>
            <person name="Ainscough R."/>
            <person name="Almeida J.P."/>
            <person name="Ambrose K.D."/>
            <person name="Anderson F."/>
            <person name="Andrew R.W."/>
            <person name="Ashwell R.I.S."/>
            <person name="Aubin K."/>
            <person name="Babbage A.K."/>
            <person name="Bagguley C.L."/>
            <person name="Bailey J."/>
            <person name="Beasley H."/>
            <person name="Bethel G."/>
            <person name="Bird C.P."/>
            <person name="Bray-Allen S."/>
            <person name="Brown J.Y."/>
            <person name="Brown A.J."/>
            <person name="Buckley D."/>
            <person name="Burton J."/>
            <person name="Bye J."/>
            <person name="Carder C."/>
            <person name="Chapman J.C."/>
            <person name="Clark S.Y."/>
            <person name="Clarke G."/>
            <person name="Clee C."/>
            <person name="Cobley V."/>
            <person name="Collier R.E."/>
            <person name="Corby N."/>
            <person name="Coville G.J."/>
            <person name="Davies J."/>
            <person name="Deadman R."/>
            <person name="Dunn M."/>
            <person name="Earthrowl M."/>
            <person name="Ellington A.G."/>
            <person name="Errington H."/>
            <person name="Frankish A."/>
            <person name="Frankland J."/>
            <person name="French L."/>
            <person name="Garner P."/>
            <person name="Garnett J."/>
            <person name="Gay L."/>
            <person name="Ghori M.R.J."/>
            <person name="Gibson R."/>
            <person name="Gilby L.M."/>
            <person name="Gillett W."/>
            <person name="Glithero R.J."/>
            <person name="Grafham D.V."/>
            <person name="Griffiths C."/>
            <person name="Griffiths-Jones S."/>
            <person name="Grocock R."/>
            <person name="Hammond S."/>
            <person name="Harrison E.S.I."/>
            <person name="Hart E."/>
            <person name="Haugen E."/>
            <person name="Heath P.D."/>
            <person name="Holmes S."/>
            <person name="Holt K."/>
            <person name="Howden P.J."/>
            <person name="Hunt A.R."/>
            <person name="Hunt S.E."/>
            <person name="Hunter G."/>
            <person name="Isherwood J."/>
            <person name="James R."/>
            <person name="Johnson C."/>
            <person name="Johnson D."/>
            <person name="Joy A."/>
            <person name="Kay M."/>
            <person name="Kershaw J.K."/>
            <person name="Kibukawa M."/>
            <person name="Kimberley A.M."/>
            <person name="King A."/>
            <person name="Knights A.J."/>
            <person name="Lad H."/>
            <person name="Laird G."/>
            <person name="Lawlor S."/>
            <person name="Leongamornlert D.A."/>
            <person name="Lloyd D.M."/>
            <person name="Loveland J."/>
            <person name="Lovell J."/>
            <person name="Lush M.J."/>
            <person name="Lyne R."/>
            <person name="Martin S."/>
            <person name="Mashreghi-Mohammadi M."/>
            <person name="Matthews L."/>
            <person name="Matthews N.S.W."/>
            <person name="McLaren S."/>
            <person name="Milne S."/>
            <person name="Mistry S."/>
            <person name="Moore M.J.F."/>
            <person name="Nickerson T."/>
            <person name="O'Dell C.N."/>
            <person name="Oliver K."/>
            <person name="Palmeiri A."/>
            <person name="Palmer S.A."/>
            <person name="Parker A."/>
            <person name="Patel D."/>
            <person name="Pearce A.V."/>
            <person name="Peck A.I."/>
            <person name="Pelan S."/>
            <person name="Phelps K."/>
            <person name="Phillimore B.J."/>
            <person name="Plumb R."/>
            <person name="Rajan J."/>
            <person name="Raymond C."/>
            <person name="Rouse G."/>
            <person name="Saenphimmachak C."/>
            <person name="Sehra H.K."/>
            <person name="Sheridan E."/>
            <person name="Shownkeen R."/>
            <person name="Sims S."/>
            <person name="Skuce C.D."/>
            <person name="Smith M."/>
            <person name="Steward C."/>
            <person name="Subramanian S."/>
            <person name="Sycamore N."/>
            <person name="Tracey A."/>
            <person name="Tromans A."/>
            <person name="Van Helmond Z."/>
            <person name="Wall M."/>
            <person name="Wallis J.M."/>
            <person name="White S."/>
            <person name="Whitehead S.L."/>
            <person name="Wilkinson J.E."/>
            <person name="Willey D.L."/>
            <person name="Williams H."/>
            <person name="Wilming L."/>
            <person name="Wray P.W."/>
            <person name="Wu Z."/>
            <person name="Coulson A."/>
            <person name="Vaudin M."/>
            <person name="Sulston J.E."/>
            <person name="Durbin R.M."/>
            <person name="Hubbard T."/>
            <person name="Wooster R."/>
            <person name="Dunham I."/>
            <person name="Carter N.P."/>
            <person name="McVean G."/>
            <person name="Ross M.T."/>
            <person name="Harrow J."/>
            <person name="Olson M.V."/>
            <person name="Beck S."/>
            <person name="Rogers J."/>
            <person name="Bentley D.R."/>
        </authorList>
    </citation>
    <scope>NUCLEOTIDE SEQUENCE [LARGE SCALE GENOMIC DNA]</scope>
</reference>
<reference key="8">
    <citation type="submission" date="2005-09" db="EMBL/GenBank/DDBJ databases">
        <authorList>
            <person name="Mural R.J."/>
            <person name="Istrail S."/>
            <person name="Sutton G.G."/>
            <person name="Florea L."/>
            <person name="Halpern A.L."/>
            <person name="Mobarry C.M."/>
            <person name="Lippert R."/>
            <person name="Walenz B."/>
            <person name="Shatkay H."/>
            <person name="Dew I."/>
            <person name="Miller J.R."/>
            <person name="Flanigan M.J."/>
            <person name="Edwards N.J."/>
            <person name="Bolanos R."/>
            <person name="Fasulo D."/>
            <person name="Halldorsson B.V."/>
            <person name="Hannenhalli S."/>
            <person name="Turner R."/>
            <person name="Yooseph S."/>
            <person name="Lu F."/>
            <person name="Nusskern D.R."/>
            <person name="Shue B.C."/>
            <person name="Zheng X.H."/>
            <person name="Zhong F."/>
            <person name="Delcher A.L."/>
            <person name="Huson D.H."/>
            <person name="Kravitz S.A."/>
            <person name="Mouchard L."/>
            <person name="Reinert K."/>
            <person name="Remington K.A."/>
            <person name="Clark A.G."/>
            <person name="Waterman M.S."/>
            <person name="Eichler E.E."/>
            <person name="Adams M.D."/>
            <person name="Hunkapiller M.W."/>
            <person name="Myers E.W."/>
            <person name="Venter J.C."/>
        </authorList>
    </citation>
    <scope>NUCLEOTIDE SEQUENCE [LARGE SCALE GENOMIC DNA]</scope>
</reference>
<reference key="9">
    <citation type="journal article" date="2004" name="Genome Res.">
        <title>The status, quality, and expansion of the NIH full-length cDNA project: the Mammalian Gene Collection (MGC).</title>
        <authorList>
            <consortium name="The MGC Project Team"/>
        </authorList>
    </citation>
    <scope>NUCLEOTIDE SEQUENCE [LARGE SCALE MRNA] (ISOFORM 1)</scope>
    <scope>VARIANT TRP-113</scope>
    <source>
        <tissue>Pancreas</tissue>
    </source>
</reference>
<reference key="10">
    <citation type="journal article" date="1998" name="Biol. Chem.">
        <title>Sorting of non-glycosylated human procathepsin S in mammalian cells.</title>
        <authorList>
            <person name="Nissler K."/>
            <person name="Kreusch S."/>
            <person name="Rommerskirch W."/>
            <person name="Strubel W."/>
            <person name="Weber E."/>
            <person name="Wiederanders B."/>
        </authorList>
    </citation>
    <scope>SUBCELLULAR LOCATION</scope>
    <scope>GLYCOSYLATION AT ASN-104</scope>
    <scope>MUTAGENESIS OF ASN-104</scope>
</reference>
<reference key="11">
    <citation type="journal article" date="2011" name="BMC Syst. Biol.">
        <title>Initial characterization of the human central proteome.</title>
        <authorList>
            <person name="Burkard T.R."/>
            <person name="Planyavsky M."/>
            <person name="Kaupe I."/>
            <person name="Breitwieser F.P."/>
            <person name="Buerckstuemmer T."/>
            <person name="Bennett K.L."/>
            <person name="Superti-Furga G."/>
            <person name="Colinge J."/>
        </authorList>
    </citation>
    <scope>IDENTIFICATION BY MASS SPECTROMETRY [LARGE SCALE ANALYSIS]</scope>
</reference>
<reference key="12">
    <citation type="journal article" date="2014" name="J. Proteomics">
        <title>An enzyme assisted RP-RPLC approach for in-depth analysis of human liver phosphoproteome.</title>
        <authorList>
            <person name="Bian Y."/>
            <person name="Song C."/>
            <person name="Cheng K."/>
            <person name="Dong M."/>
            <person name="Wang F."/>
            <person name="Huang J."/>
            <person name="Sun D."/>
            <person name="Wang L."/>
            <person name="Ye M."/>
            <person name="Zou H."/>
        </authorList>
    </citation>
    <scope>IDENTIFICATION BY MASS SPECTROMETRY [LARGE SCALE ANALYSIS]</scope>
    <source>
        <tissue>Liver</tissue>
    </source>
</reference>
<reference key="13">
    <citation type="journal article" date="2015" name="Proteomics">
        <title>N-terminome analysis of the human mitochondrial proteome.</title>
        <authorList>
            <person name="Vaca Jacome A.S."/>
            <person name="Rabilloud T."/>
            <person name="Schaeffer-Reiss C."/>
            <person name="Rompais M."/>
            <person name="Ayoub D."/>
            <person name="Lane L."/>
            <person name="Bairoch A."/>
            <person name="Van Dorsselaer A."/>
            <person name="Carapito C."/>
        </authorList>
    </citation>
    <scope>IDENTIFICATION BY MASS SPECTROMETRY [LARGE SCALE ANALYSIS]</scope>
</reference>
<reference key="14">
    <citation type="journal article" date="2019" name="IScience">
        <title>The Phosphoinositide Kinase PIKfyve Promotes Cathepsin-S-Mediated Major Histocompatibility Complex Class II Antigen Presentation.</title>
        <authorList>
            <person name="Baranov M.V."/>
            <person name="Bianchi F."/>
            <person name="Schirmacher A."/>
            <person name="van Aart M.A.C."/>
            <person name="Maassen S."/>
            <person name="Muntjewerff E.M."/>
            <person name="Dingjan I."/>
            <person name="Ter Beest M."/>
            <person name="Verdoes M."/>
            <person name="Keyser S.G.L."/>
            <person name="Bertozzi C.R."/>
            <person name="Diederichsen U."/>
            <person name="van den Bogaart G."/>
        </authorList>
    </citation>
    <scope>FUNCTION</scope>
    <scope>SUBCELLULAR LOCATION</scope>
</reference>
<reference key="15">
    <citation type="journal article" date="1998" name="Protein Eng.">
        <title>Three-dimensional structures of the cysteine proteases cathepsins K and S deduced by knowledge-based modelling and active site characteristics.</title>
        <authorList>
            <person name="Fengler A."/>
            <person name="Brandt W."/>
        </authorList>
    </citation>
    <scope>3D-STRUCTURE MODELING OF 115-331</scope>
</reference>
<reference key="16">
    <citation type="journal article" date="2002" name="Acta Crystallogr. D">
        <title>Structure of a Cys25--&gt;Ser mutant of human cathepsin S.</title>
        <authorList>
            <person name="Turkenburg J.P."/>
            <person name="Lamers M.B."/>
            <person name="Brzozowski A.M."/>
            <person name="Wright L.M."/>
            <person name="Hubbard R.E."/>
            <person name="Sturt S.L."/>
            <person name="Williams D.H."/>
        </authorList>
    </citation>
    <scope>X-RAY CRYSTALLOGRAPHY (2.2 ANGSTROMS) OF 115-331</scope>
</reference>
<reference key="17">
    <citation type="journal article" date="2007" name="J. Med. Chem.">
        <title>Characterization and optimization of selective, nonpeptidic inhibitors of cathepsin S with an unprecedented binding mode.</title>
        <authorList>
            <person name="Inagaki H."/>
            <person name="Tsuruoka H."/>
            <person name="Hornsby M."/>
            <person name="Lesley S.A."/>
            <person name="Spraggon G."/>
            <person name="Ellman J.A."/>
        </authorList>
    </citation>
    <scope>X-RAY CRYSTALLOGRAPHY (1.6 ANGSTROMS) OF 112-331 IN COMPLEX WITH INHIBITOR</scope>
    <scope>DISULFIDE BONDS</scope>
</reference>
<protein>
    <recommendedName>
        <fullName>Cathepsin S</fullName>
        <ecNumber>3.4.22.27</ecNumber>
    </recommendedName>
</protein>
<accession>P25774</accession>
<accession>B4DWC9</accession>
<accession>D3DV05</accession>
<accession>Q5T5I0</accession>
<accession>Q6FHS5</accession>
<accession>Q9BUG3</accession>
<feature type="signal peptide" evidence="2">
    <location>
        <begin position="1"/>
        <end position="16"/>
    </location>
</feature>
<feature type="propeptide" id="PRO_0000026313" description="Activation peptide">
    <location>
        <begin position="17"/>
        <end position="114"/>
    </location>
</feature>
<feature type="chain" id="PRO_0000026314" description="Cathepsin S">
    <location>
        <begin position="115"/>
        <end position="331"/>
    </location>
</feature>
<feature type="active site" evidence="1">
    <location>
        <position position="139"/>
    </location>
</feature>
<feature type="active site" evidence="1">
    <location>
        <position position="278"/>
    </location>
</feature>
<feature type="active site" evidence="1">
    <location>
        <position position="298"/>
    </location>
</feature>
<feature type="glycosylation site" description="N-linked (GlcNAc...) asparagine" evidence="13">
    <location>
        <position position="104"/>
    </location>
</feature>
<feature type="disulfide bond" evidence="10">
    <location>
        <begin position="126"/>
        <end position="224"/>
    </location>
</feature>
<feature type="disulfide bond" evidence="10">
    <location>
        <begin position="136"/>
        <end position="180"/>
    </location>
</feature>
<feature type="disulfide bond" evidence="10">
    <location>
        <begin position="170"/>
        <end position="213"/>
    </location>
</feature>
<feature type="disulfide bond" evidence="10">
    <location>
        <begin position="272"/>
        <end position="320"/>
    </location>
</feature>
<feature type="splice variant" id="VSP_042712" description="In isoform 2." evidence="15">
    <location>
        <begin position="84"/>
        <end position="133"/>
    </location>
</feature>
<feature type="sequence variant" id="VAR_025385" description="In dbSNP:rs2230061." evidence="8 9 14">
    <original>R</original>
    <variation>W</variation>
    <location>
        <position position="113"/>
    </location>
</feature>
<feature type="sequence variant" id="VAR_025386" description="In dbSNP:rs1059604." evidence="6 12">
    <original>S</original>
    <variation>T</variation>
    <location>
        <position position="161"/>
    </location>
</feature>
<feature type="mutagenesis site" description="Abolishes glycosylation." evidence="13">
    <original>N</original>
    <variation>Q</variation>
    <location>
        <position position="104"/>
    </location>
</feature>
<feature type="sequence conflict" description="In Ref. 1 and 4." evidence="16" ref="1 4">
    <original>M</original>
    <variation>T</variation>
    <location>
        <position position="92"/>
    </location>
</feature>
<feature type="helix" evidence="17">
    <location>
        <begin position="22"/>
        <end position="24"/>
    </location>
</feature>
<feature type="helix" evidence="17">
    <location>
        <begin position="25"/>
        <end position="35"/>
    </location>
</feature>
<feature type="helix" evidence="17">
    <location>
        <begin position="44"/>
        <end position="67"/>
    </location>
</feature>
<feature type="strand" evidence="17">
    <location>
        <begin position="72"/>
        <end position="75"/>
    </location>
</feature>
<feature type="helix" evidence="17">
    <location>
        <begin position="79"/>
        <end position="82"/>
    </location>
</feature>
<feature type="helix" evidence="17">
    <location>
        <begin position="85"/>
        <end position="91"/>
    </location>
</feature>
<feature type="helix" evidence="17">
    <location>
        <begin position="100"/>
        <end position="102"/>
    </location>
</feature>
<feature type="helix" evidence="21">
    <location>
        <begin position="121"/>
        <end position="124"/>
    </location>
</feature>
<feature type="strand" evidence="18">
    <location>
        <begin position="135"/>
        <end position="137"/>
    </location>
</feature>
<feature type="helix" evidence="21">
    <location>
        <begin position="139"/>
        <end position="156"/>
    </location>
</feature>
<feature type="helix" evidence="21">
    <location>
        <begin position="164"/>
        <end position="170"/>
    </location>
</feature>
<feature type="helix" evidence="21">
    <location>
        <begin position="173"/>
        <end position="175"/>
    </location>
</feature>
<feature type="helix" evidence="19">
    <location>
        <begin position="179"/>
        <end position="181"/>
    </location>
</feature>
<feature type="helix" evidence="21">
    <location>
        <begin position="185"/>
        <end position="195"/>
    </location>
</feature>
<feature type="strand" evidence="21">
    <location>
        <begin position="198"/>
        <end position="200"/>
    </location>
</feature>
<feature type="turn" evidence="21">
    <location>
        <begin position="201"/>
        <end position="203"/>
    </location>
</feature>
<feature type="helix" evidence="21">
    <location>
        <begin position="217"/>
        <end position="219"/>
    </location>
</feature>
<feature type="strand" evidence="21">
    <location>
        <begin position="220"/>
        <end position="222"/>
    </location>
</feature>
<feature type="strand" evidence="21">
    <location>
        <begin position="226"/>
        <end position="229"/>
    </location>
</feature>
<feature type="helix" evidence="21">
    <location>
        <begin position="235"/>
        <end position="244"/>
    </location>
</feature>
<feature type="strand" evidence="21">
    <location>
        <begin position="248"/>
        <end position="252"/>
    </location>
</feature>
<feature type="helix" evidence="21">
    <location>
        <begin position="257"/>
        <end position="261"/>
    </location>
</feature>
<feature type="strand" evidence="21">
    <location>
        <begin position="264"/>
        <end position="267"/>
    </location>
</feature>
<feature type="strand" evidence="21">
    <location>
        <begin position="278"/>
        <end position="288"/>
    </location>
</feature>
<feature type="strand" evidence="21">
    <location>
        <begin position="291"/>
        <end position="297"/>
    </location>
</feature>
<feature type="turn" evidence="20">
    <location>
        <begin position="302"/>
        <end position="305"/>
    </location>
</feature>
<feature type="strand" evidence="21">
    <location>
        <begin position="309"/>
        <end position="313"/>
    </location>
</feature>
<feature type="strand" evidence="21">
    <location>
        <begin position="315"/>
        <end position="318"/>
    </location>
</feature>
<feature type="helix" evidence="21">
    <location>
        <begin position="319"/>
        <end position="321"/>
    </location>
</feature>
<feature type="turn" evidence="21">
    <location>
        <begin position="322"/>
        <end position="324"/>
    </location>
</feature>
<feature type="strand" evidence="21">
    <location>
        <begin position="327"/>
        <end position="330"/>
    </location>
</feature>
<name>CATS_HUMAN</name>
<dbReference type="EC" id="3.4.22.27"/>
<dbReference type="EMBL" id="S93414">
    <property type="protein sequence ID" value="AAB22005.1"/>
    <property type="molecule type" value="mRNA"/>
</dbReference>
<dbReference type="EMBL" id="M86553">
    <property type="protein sequence ID" value="AAA35655.1"/>
    <property type="molecule type" value="mRNA"/>
</dbReference>
<dbReference type="EMBL" id="M90696">
    <property type="protein sequence ID" value="AAC37592.1"/>
    <property type="molecule type" value="mRNA"/>
</dbReference>
<dbReference type="EMBL" id="U07374">
    <property type="protein sequence ID" value="AAB60643.2"/>
    <property type="molecule type" value="Genomic_DNA"/>
</dbReference>
<dbReference type="EMBL" id="U07370">
    <property type="protein sequence ID" value="AAB60643.2"/>
    <property type="status" value="JOINED"/>
    <property type="molecule type" value="Genomic_DNA"/>
</dbReference>
<dbReference type="EMBL" id="U07371">
    <property type="protein sequence ID" value="AAB60643.2"/>
    <property type="status" value="JOINED"/>
    <property type="molecule type" value="Genomic_DNA"/>
</dbReference>
<dbReference type="EMBL" id="U07372">
    <property type="protein sequence ID" value="AAB60643.2"/>
    <property type="status" value="JOINED"/>
    <property type="molecule type" value="Genomic_DNA"/>
</dbReference>
<dbReference type="EMBL" id="U07373">
    <property type="protein sequence ID" value="AAB60643.2"/>
    <property type="status" value="JOINED"/>
    <property type="molecule type" value="Genomic_DNA"/>
</dbReference>
<dbReference type="EMBL" id="CR541676">
    <property type="protein sequence ID" value="CAG46477.1"/>
    <property type="molecule type" value="mRNA"/>
</dbReference>
<dbReference type="EMBL" id="AK301472">
    <property type="protein sequence ID" value="BAG62991.1"/>
    <property type="molecule type" value="mRNA"/>
</dbReference>
<dbReference type="EMBL" id="AK314482">
    <property type="protein sequence ID" value="BAG37086.1"/>
    <property type="molecule type" value="mRNA"/>
</dbReference>
<dbReference type="EMBL" id="AL356292">
    <property type="status" value="NOT_ANNOTATED_CDS"/>
    <property type="molecule type" value="Genomic_DNA"/>
</dbReference>
<dbReference type="EMBL" id="CH471121">
    <property type="protein sequence ID" value="EAW53518.1"/>
    <property type="molecule type" value="Genomic_DNA"/>
</dbReference>
<dbReference type="EMBL" id="CH471121">
    <property type="protein sequence ID" value="EAW53519.1"/>
    <property type="molecule type" value="Genomic_DNA"/>
</dbReference>
<dbReference type="EMBL" id="BC002642">
    <property type="protein sequence ID" value="AAH02642.1"/>
    <property type="molecule type" value="mRNA"/>
</dbReference>
<dbReference type="CCDS" id="CCDS55634.1">
    <molecule id="P25774-2"/>
</dbReference>
<dbReference type="CCDS" id="CCDS968.1">
    <molecule id="P25774-1"/>
</dbReference>
<dbReference type="PIR" id="A42482">
    <property type="entry name" value="A42482"/>
</dbReference>
<dbReference type="RefSeq" id="NP_001186668.1">
    <molecule id="P25774-2"/>
    <property type="nucleotide sequence ID" value="NM_001199739.2"/>
</dbReference>
<dbReference type="RefSeq" id="NP_004070.3">
    <molecule id="P25774-1"/>
    <property type="nucleotide sequence ID" value="NM_004079.4"/>
</dbReference>
<dbReference type="PDB" id="1GLO">
    <property type="method" value="X-ray"/>
    <property type="resolution" value="2.20 A"/>
    <property type="chains" value="A=115-331"/>
</dbReference>
<dbReference type="PDB" id="1MS6">
    <property type="method" value="X-ray"/>
    <property type="resolution" value="1.90 A"/>
    <property type="chains" value="A=115-331"/>
</dbReference>
<dbReference type="PDB" id="1NPZ">
    <property type="method" value="X-ray"/>
    <property type="resolution" value="2.00 A"/>
    <property type="chains" value="A/B=115-331"/>
</dbReference>
<dbReference type="PDB" id="1NQC">
    <property type="method" value="X-ray"/>
    <property type="resolution" value="1.80 A"/>
    <property type="chains" value="A=115-331"/>
</dbReference>
<dbReference type="PDB" id="2C0Y">
    <property type="method" value="X-ray"/>
    <property type="resolution" value="2.10 A"/>
    <property type="chains" value="A=17-331"/>
</dbReference>
<dbReference type="PDB" id="2F1G">
    <property type="method" value="X-ray"/>
    <property type="resolution" value="1.90 A"/>
    <property type="chains" value="A/B=112-331"/>
</dbReference>
<dbReference type="PDB" id="2FQ9">
    <property type="method" value="X-ray"/>
    <property type="resolution" value="1.65 A"/>
    <property type="chains" value="A/B=114-331"/>
</dbReference>
<dbReference type="PDB" id="2FRA">
    <property type="method" value="X-ray"/>
    <property type="resolution" value="1.90 A"/>
    <property type="chains" value="A/B=114-330"/>
</dbReference>
<dbReference type="PDB" id="2FRQ">
    <property type="method" value="X-ray"/>
    <property type="resolution" value="1.60 A"/>
    <property type="chains" value="A/B=114-331"/>
</dbReference>
<dbReference type="PDB" id="2FT2">
    <property type="method" value="X-ray"/>
    <property type="resolution" value="1.70 A"/>
    <property type="chains" value="A/B=114-331"/>
</dbReference>
<dbReference type="PDB" id="2FUD">
    <property type="method" value="X-ray"/>
    <property type="resolution" value="1.95 A"/>
    <property type="chains" value="A/B=114-331"/>
</dbReference>
<dbReference type="PDB" id="2FYE">
    <property type="method" value="X-ray"/>
    <property type="resolution" value="2.20 A"/>
    <property type="chains" value="A=115-331"/>
</dbReference>
<dbReference type="PDB" id="2G6D">
    <property type="method" value="X-ray"/>
    <property type="resolution" value="2.50 A"/>
    <property type="chains" value="A=115-331"/>
</dbReference>
<dbReference type="PDB" id="2G7Y">
    <property type="method" value="X-ray"/>
    <property type="resolution" value="2.00 A"/>
    <property type="chains" value="A/B=114-330"/>
</dbReference>
<dbReference type="PDB" id="2H7J">
    <property type="method" value="X-ray"/>
    <property type="resolution" value="1.50 A"/>
    <property type="chains" value="A/B=112-331"/>
</dbReference>
<dbReference type="PDB" id="2HH5">
    <property type="method" value="X-ray"/>
    <property type="resolution" value="1.80 A"/>
    <property type="chains" value="A/B=112-331"/>
</dbReference>
<dbReference type="PDB" id="2HHN">
    <property type="method" value="X-ray"/>
    <property type="resolution" value="1.55 A"/>
    <property type="chains" value="A/B=112-331"/>
</dbReference>
<dbReference type="PDB" id="2HXZ">
    <property type="method" value="X-ray"/>
    <property type="resolution" value="1.90 A"/>
    <property type="chains" value="A/B/C=112-331"/>
</dbReference>
<dbReference type="PDB" id="2OP3">
    <property type="method" value="X-ray"/>
    <property type="resolution" value="1.60 A"/>
    <property type="chains" value="A/B=112-331"/>
</dbReference>
<dbReference type="PDB" id="2R9M">
    <property type="method" value="X-ray"/>
    <property type="resolution" value="1.97 A"/>
    <property type="chains" value="A/B=115-331"/>
</dbReference>
<dbReference type="PDB" id="2R9N">
    <property type="method" value="X-ray"/>
    <property type="resolution" value="2.00 A"/>
    <property type="chains" value="A/B=115-331"/>
</dbReference>
<dbReference type="PDB" id="2R9O">
    <property type="method" value="X-ray"/>
    <property type="resolution" value="2.00 A"/>
    <property type="chains" value="A/B=115-331"/>
</dbReference>
<dbReference type="PDB" id="3IEJ">
    <property type="method" value="X-ray"/>
    <property type="resolution" value="2.18 A"/>
    <property type="chains" value="A/B=115-331"/>
</dbReference>
<dbReference type="PDB" id="3N3G">
    <property type="method" value="X-ray"/>
    <property type="resolution" value="1.60 A"/>
    <property type="chains" value="A/B=115-331"/>
</dbReference>
<dbReference type="PDB" id="3N4C">
    <property type="method" value="X-ray"/>
    <property type="resolution" value="1.90 A"/>
    <property type="chains" value="A/B=115-331"/>
</dbReference>
<dbReference type="PDB" id="3OVX">
    <property type="method" value="X-ray"/>
    <property type="resolution" value="1.49 A"/>
    <property type="chains" value="A/B=114-331"/>
</dbReference>
<dbReference type="PDB" id="4P6E">
    <property type="method" value="X-ray"/>
    <property type="resolution" value="1.80 A"/>
    <property type="chains" value="A/B=109-331"/>
</dbReference>
<dbReference type="PDB" id="4P6G">
    <property type="method" value="X-ray"/>
    <property type="resolution" value="1.58 A"/>
    <property type="chains" value="A/B/C/D=114-331"/>
</dbReference>
<dbReference type="PDB" id="5QBU">
    <property type="method" value="X-ray"/>
    <property type="resolution" value="2.78 A"/>
    <property type="chains" value="A/B=114-331"/>
</dbReference>
<dbReference type="PDB" id="5QBV">
    <property type="method" value="X-ray"/>
    <property type="resolution" value="1.80 A"/>
    <property type="chains" value="A/B=115-331"/>
</dbReference>
<dbReference type="PDB" id="5QBW">
    <property type="method" value="X-ray"/>
    <property type="resolution" value="3.01 A"/>
    <property type="chains" value="A=114-331"/>
</dbReference>
<dbReference type="PDB" id="5QBX">
    <property type="method" value="X-ray"/>
    <property type="resolution" value="2.10 A"/>
    <property type="chains" value="A/B=114-331"/>
</dbReference>
<dbReference type="PDB" id="5QBY">
    <property type="method" value="X-ray"/>
    <property type="resolution" value="2.25 A"/>
    <property type="chains" value="A/B=114-331"/>
</dbReference>
<dbReference type="PDB" id="5QBZ">
    <property type="method" value="X-ray"/>
    <property type="resolution" value="2.80 A"/>
    <property type="chains" value="A=114-331"/>
</dbReference>
<dbReference type="PDB" id="5QC0">
    <property type="method" value="X-ray"/>
    <property type="resolution" value="1.90 A"/>
    <property type="chains" value="A/B=114-331"/>
</dbReference>
<dbReference type="PDB" id="5QC1">
    <property type="method" value="X-ray"/>
    <property type="resolution" value="2.08 A"/>
    <property type="chains" value="A/B=114-331"/>
</dbReference>
<dbReference type="PDB" id="5QC2">
    <property type="method" value="X-ray"/>
    <property type="resolution" value="2.26 A"/>
    <property type="chains" value="A/B=114-331"/>
</dbReference>
<dbReference type="PDB" id="5QC3">
    <property type="method" value="X-ray"/>
    <property type="resolution" value="2.00 A"/>
    <property type="chains" value="A/B=114-331"/>
</dbReference>
<dbReference type="PDB" id="5QC4">
    <property type="method" value="X-ray"/>
    <property type="resolution" value="2.00 A"/>
    <property type="chains" value="A/B=115-331"/>
</dbReference>
<dbReference type="PDB" id="5QC5">
    <property type="method" value="X-ray"/>
    <property type="resolution" value="2.40 A"/>
    <property type="chains" value="A/B=114-331"/>
</dbReference>
<dbReference type="PDB" id="5QC6">
    <property type="method" value="X-ray"/>
    <property type="resolution" value="2.10 A"/>
    <property type="chains" value="A/B=114-331"/>
</dbReference>
<dbReference type="PDB" id="5QC7">
    <property type="method" value="X-ray"/>
    <property type="resolution" value="1.90 A"/>
    <property type="chains" value="A/B=114-331"/>
</dbReference>
<dbReference type="PDB" id="5QC8">
    <property type="method" value="X-ray"/>
    <property type="resolution" value="1.74 A"/>
    <property type="chains" value="A/B=114-331"/>
</dbReference>
<dbReference type="PDB" id="5QC9">
    <property type="method" value="X-ray"/>
    <property type="resolution" value="2.00 A"/>
    <property type="chains" value="A/B=114-331"/>
</dbReference>
<dbReference type="PDB" id="5QCA">
    <property type="method" value="X-ray"/>
    <property type="resolution" value="2.29 A"/>
    <property type="chains" value="A/B=114-331"/>
</dbReference>
<dbReference type="PDB" id="5QCB">
    <property type="method" value="X-ray"/>
    <property type="resolution" value="2.20 A"/>
    <property type="chains" value="A/B=114-331"/>
</dbReference>
<dbReference type="PDB" id="5QCC">
    <property type="method" value="X-ray"/>
    <property type="resolution" value="1.80 A"/>
    <property type="chains" value="A/B=114-331"/>
</dbReference>
<dbReference type="PDB" id="5QCD">
    <property type="method" value="X-ray"/>
    <property type="resolution" value="1.95 A"/>
    <property type="chains" value="A=114-331"/>
</dbReference>
<dbReference type="PDB" id="5QCE">
    <property type="method" value="X-ray"/>
    <property type="resolution" value="2.78 A"/>
    <property type="chains" value="A/B=114-331"/>
</dbReference>
<dbReference type="PDB" id="5QCF">
    <property type="method" value="X-ray"/>
    <property type="resolution" value="2.10 A"/>
    <property type="chains" value="A=114-331"/>
</dbReference>
<dbReference type="PDB" id="5QCG">
    <property type="method" value="X-ray"/>
    <property type="resolution" value="2.69 A"/>
    <property type="chains" value="A/B=114-331"/>
</dbReference>
<dbReference type="PDB" id="5QCH">
    <property type="method" value="X-ray"/>
    <property type="resolution" value="2.20 A"/>
    <property type="chains" value="A/B/C/D=114-331"/>
</dbReference>
<dbReference type="PDB" id="5QCI">
    <property type="method" value="X-ray"/>
    <property type="resolution" value="2.18 A"/>
    <property type="chains" value="A=114-331"/>
</dbReference>
<dbReference type="PDB" id="5QCJ">
    <property type="method" value="X-ray"/>
    <property type="resolution" value="2.00 A"/>
    <property type="chains" value="A/B/C=114-331"/>
</dbReference>
<dbReference type="PDB" id="6YYN">
    <property type="method" value="X-ray"/>
    <property type="resolution" value="2.22 A"/>
    <property type="chains" value="AAA/BBB=113-331"/>
</dbReference>
<dbReference type="PDB" id="6YYO">
    <property type="method" value="X-ray"/>
    <property type="resolution" value="1.50 A"/>
    <property type="chains" value="AAA/BBB=113-331"/>
</dbReference>
<dbReference type="PDB" id="6YYP">
    <property type="method" value="X-ray"/>
    <property type="resolution" value="2.05 A"/>
    <property type="chains" value="AAA/BBB=113-331"/>
</dbReference>
<dbReference type="PDB" id="6YYQ">
    <property type="method" value="X-ray"/>
    <property type="resolution" value="2.51 A"/>
    <property type="chains" value="AAA/BBB/CCC/DDD=113-331"/>
</dbReference>
<dbReference type="PDB" id="6YYR">
    <property type="method" value="X-ray"/>
    <property type="resolution" value="1.30 A"/>
    <property type="chains" value="AAA/BBB=113-331"/>
</dbReference>
<dbReference type="PDB" id="8PI3">
    <property type="method" value="X-ray"/>
    <property type="resolution" value="1.73 A"/>
    <property type="chains" value="A=113-331"/>
</dbReference>
<dbReference type="PDB" id="8RND">
    <property type="method" value="X-ray"/>
    <property type="resolution" value="1.56 A"/>
    <property type="chains" value="A=109-331"/>
</dbReference>
<dbReference type="PDB" id="9GJ2">
    <property type="method" value="X-ray"/>
    <property type="resolution" value="1.15 A"/>
    <property type="chains" value="A/B=114-331"/>
</dbReference>
<dbReference type="PDBsum" id="1GLO"/>
<dbReference type="PDBsum" id="1MS6"/>
<dbReference type="PDBsum" id="1NPZ"/>
<dbReference type="PDBsum" id="1NQC"/>
<dbReference type="PDBsum" id="2C0Y"/>
<dbReference type="PDBsum" id="2F1G"/>
<dbReference type="PDBsum" id="2FQ9"/>
<dbReference type="PDBsum" id="2FRA"/>
<dbReference type="PDBsum" id="2FRQ"/>
<dbReference type="PDBsum" id="2FT2"/>
<dbReference type="PDBsum" id="2FUD"/>
<dbReference type="PDBsum" id="2FYE"/>
<dbReference type="PDBsum" id="2G6D"/>
<dbReference type="PDBsum" id="2G7Y"/>
<dbReference type="PDBsum" id="2H7J"/>
<dbReference type="PDBsum" id="2HH5"/>
<dbReference type="PDBsum" id="2HHN"/>
<dbReference type="PDBsum" id="2HXZ"/>
<dbReference type="PDBsum" id="2OP3"/>
<dbReference type="PDBsum" id="2R9M"/>
<dbReference type="PDBsum" id="2R9N"/>
<dbReference type="PDBsum" id="2R9O"/>
<dbReference type="PDBsum" id="3IEJ"/>
<dbReference type="PDBsum" id="3N3G"/>
<dbReference type="PDBsum" id="3N4C"/>
<dbReference type="PDBsum" id="3OVX"/>
<dbReference type="PDBsum" id="4P6E"/>
<dbReference type="PDBsum" id="4P6G"/>
<dbReference type="PDBsum" id="5QBU"/>
<dbReference type="PDBsum" id="5QBV"/>
<dbReference type="PDBsum" id="5QBW"/>
<dbReference type="PDBsum" id="5QBX"/>
<dbReference type="PDBsum" id="5QBY"/>
<dbReference type="PDBsum" id="5QBZ"/>
<dbReference type="PDBsum" id="5QC0"/>
<dbReference type="PDBsum" id="5QC1"/>
<dbReference type="PDBsum" id="5QC2"/>
<dbReference type="PDBsum" id="5QC3"/>
<dbReference type="PDBsum" id="5QC4"/>
<dbReference type="PDBsum" id="5QC5"/>
<dbReference type="PDBsum" id="5QC6"/>
<dbReference type="PDBsum" id="5QC7"/>
<dbReference type="PDBsum" id="5QC8"/>
<dbReference type="PDBsum" id="5QC9"/>
<dbReference type="PDBsum" id="5QCA"/>
<dbReference type="PDBsum" id="5QCB"/>
<dbReference type="PDBsum" id="5QCC"/>
<dbReference type="PDBsum" id="5QCD"/>
<dbReference type="PDBsum" id="5QCE"/>
<dbReference type="PDBsum" id="5QCF"/>
<dbReference type="PDBsum" id="5QCG"/>
<dbReference type="PDBsum" id="5QCH"/>
<dbReference type="PDBsum" id="5QCI"/>
<dbReference type="PDBsum" id="5QCJ"/>
<dbReference type="PDBsum" id="6YYN"/>
<dbReference type="PDBsum" id="6YYO"/>
<dbReference type="PDBsum" id="6YYP"/>
<dbReference type="PDBsum" id="6YYQ"/>
<dbReference type="PDBsum" id="6YYR"/>
<dbReference type="PDBsum" id="8PI3"/>
<dbReference type="PDBsum" id="8RND"/>
<dbReference type="PDBsum" id="9GJ2"/>
<dbReference type="SMR" id="P25774"/>
<dbReference type="BioGRID" id="107900">
    <property type="interactions" value="141"/>
</dbReference>
<dbReference type="DIP" id="DIP-61077N"/>
<dbReference type="FunCoup" id="P25774">
    <property type="interactions" value="558"/>
</dbReference>
<dbReference type="IntAct" id="P25774">
    <property type="interactions" value="8"/>
</dbReference>
<dbReference type="STRING" id="9606.ENSP00000357981"/>
<dbReference type="BindingDB" id="P25774"/>
<dbReference type="ChEMBL" id="CHEMBL2954"/>
<dbReference type="DrugBank" id="DB08195">
    <property type="generic name" value="(1R)-2-[(CYANOMETHYL)AMINO]-1-({[2-(DIFLUOROMETHOXY)BENZYL]SULFONYL}METHYL)-2-OXOETHYL MORPHOLINE-4-CARBOXYLATE"/>
</dbReference>
<dbReference type="DrugBank" id="DB08611">
    <property type="generic name" value="2-[(2',3',4'-TRIFLUOROBIPHENYL-2-YL)OXY]ETHANOL"/>
</dbReference>
<dbReference type="DrugBank" id="DB05951">
    <property type="generic name" value="CRA-028129"/>
</dbReference>
<dbReference type="DrugBank" id="DB12010">
    <property type="generic name" value="Fostamatinib"/>
</dbReference>
<dbReference type="DrugBank" id="DB03837">
    <property type="generic name" value="Morpholine-4-Carboxylic Acid (1-(3-Benzenesulfonyl-1-Phenethylallylcarbamoyl)-3-Methylbutyl)-Amide"/>
</dbReference>
<dbReference type="DrugBank" id="DB03984">
    <property type="generic name" value="Morpholine-4-Carboxylic Acid [1-(2-Benzylsulfanyl-1-Formyl-Ethylcarbamoyl)-2-Phenyl-Ethyl]-Amide"/>
</dbReference>
<dbReference type="DrugBank" id="DB03767">
    <property type="generic name" value="Morpholine-4-Carboxylic Acid [1s-(2-Benzyloxy-1r-Cyano-Ethylcarbamoyl)-3-Methyl-Butyl]Amide"/>
</dbReference>
<dbReference type="DrugBank" id="DB07587">
    <property type="generic name" value="N-(1-CYANOCYCLOPROPYL)-3-({[(2S)-5-OXOPYRROLIDIN-2-YL]METHYL}SULFONYL)-N~2~-[(1S)-2,2,2-TRIFLUORO-1-(4-FLUOROPHENYL)ETHYL]-L-ALANINAMIDE"/>
</dbReference>
<dbReference type="DrugBank" id="DB07878">
    <property type="generic name" value="N-[(1S)-1-{1-[(1R,3E)-1-ACETYLPENT-3-EN-1-YL]-1H-1,2,3-TRIAZOL-4-YL}-1,2-DIMETHYLPROPYL]BENZAMIDE"/>
</dbReference>
<dbReference type="DrugBank" id="DB08752">
    <property type="generic name" value="N-[(1S)-2-[(4-cyano-1-methylpiperidin-4-yl)amino]-1-(cyclohexylmethyl)-2-oxoethyl]morpholine-4-carboxamide"/>
</dbReference>
<dbReference type="DrugBank" id="DB08755">
    <property type="generic name" value="N-[(1S)-2-{[(1R)-2-(benzyloxy)-1-cyano-1-methylethyl]amino}-1-(cyclohexylmethyl)-2-oxoethyl]morpholine-4-carboxamide"/>
</dbReference>
<dbReference type="DrugBank" id="DB07589">
    <property type="generic name" value="N-[1-(AMINOMETHYL)CYCLOPROPYL]-3-(BENZYLSULFONYL)-N~2~-[(1S)-2,2,2-TRIFLUORO-1-(4-HYDROXYPHENYL)ETHYL]-L-ALANINAMIDE"/>
</dbReference>
<dbReference type="DrugBank" id="DB07520">
    <property type="generic name" value="N-[1-(AMINOMETHYL)CYCLOPROPYL]-3-(MORPHOLIN-4-YLSULFONYL)-N~2~-[(1S)-2,2,2-TRIFLUORO-1-(4-FLUOROPHENYL)ETHYL]-L-ALANINAMIDE"/>
</dbReference>
<dbReference type="DrugBank" id="DB07839">
    <property type="generic name" value="N~2~-1,3-BENZOXAZOL-2-YL-3-CYCLOHEXYL-N-{2-[(4-METHOXYPHENYL)AMINO]ETHYL}-L-ALANINAMIDE"/>
</dbReference>
<dbReference type="DrugBank" id="DB15297">
    <property type="generic name" value="Petesicatib"/>
</dbReference>
<dbReference type="DrugCentral" id="P25774"/>
<dbReference type="GuidetoPHARMACOLOGY" id="2353"/>
<dbReference type="MEROPS" id="C01.034"/>
<dbReference type="MEROPS" id="I29.004"/>
<dbReference type="GlyCosmos" id="P25774">
    <property type="glycosylation" value="1 site, No reported glycans"/>
</dbReference>
<dbReference type="GlyGen" id="P25774">
    <property type="glycosylation" value="3 sites"/>
</dbReference>
<dbReference type="iPTMnet" id="P25774"/>
<dbReference type="PhosphoSitePlus" id="P25774"/>
<dbReference type="BioMuta" id="CTSS"/>
<dbReference type="DMDM" id="88984046"/>
<dbReference type="jPOST" id="P25774"/>
<dbReference type="MassIVE" id="P25774"/>
<dbReference type="PaxDb" id="9606-ENSP00000357981"/>
<dbReference type="PeptideAtlas" id="P25774"/>
<dbReference type="ProteomicsDB" id="54285">
    <molecule id="P25774-1"/>
</dbReference>
<dbReference type="ProteomicsDB" id="54286">
    <molecule id="P25774-2"/>
</dbReference>
<dbReference type="Pumba" id="P25774"/>
<dbReference type="ABCD" id="P25774">
    <property type="antibodies" value="1 sequenced antibody"/>
</dbReference>
<dbReference type="Antibodypedia" id="849">
    <property type="antibodies" value="481 antibodies from 37 providers"/>
</dbReference>
<dbReference type="DNASU" id="1520"/>
<dbReference type="Ensembl" id="ENST00000368985.8">
    <molecule id="P25774-1"/>
    <property type="protein sequence ID" value="ENSP00000357981.3"/>
    <property type="gene ID" value="ENSG00000163131.12"/>
</dbReference>
<dbReference type="Ensembl" id="ENST00000472977.7">
    <molecule id="P25774-1"/>
    <property type="protein sequence ID" value="ENSP00000475176.2"/>
    <property type="gene ID" value="ENSG00000163131.12"/>
</dbReference>
<dbReference type="Ensembl" id="ENST00000607427.2">
    <molecule id="P25774-1"/>
    <property type="protein sequence ID" value="ENSP00000475557.2"/>
    <property type="gene ID" value="ENSG00000163131.12"/>
</dbReference>
<dbReference type="Ensembl" id="ENST00000680288.1">
    <molecule id="P25774-2"/>
    <property type="protein sequence ID" value="ENSP00000506001.1"/>
    <property type="gene ID" value="ENSG00000163131.12"/>
</dbReference>
<dbReference type="Ensembl" id="ENST00000681444.1">
    <molecule id="P25774-1"/>
    <property type="protein sequence ID" value="ENSP00000505359.1"/>
    <property type="gene ID" value="ENSG00000163131.12"/>
</dbReference>
<dbReference type="GeneID" id="1520"/>
<dbReference type="KEGG" id="hsa:1520"/>
<dbReference type="MANE-Select" id="ENST00000368985.8">
    <property type="protein sequence ID" value="ENSP00000357981.3"/>
    <property type="RefSeq nucleotide sequence ID" value="NM_004079.5"/>
    <property type="RefSeq protein sequence ID" value="NP_004070.3"/>
</dbReference>
<dbReference type="UCSC" id="uc001evn.3">
    <molecule id="P25774-1"/>
    <property type="organism name" value="human"/>
</dbReference>
<dbReference type="AGR" id="HGNC:2545"/>
<dbReference type="CTD" id="1520"/>
<dbReference type="DisGeNET" id="1520"/>
<dbReference type="GeneCards" id="CTSS"/>
<dbReference type="HGNC" id="HGNC:2545">
    <property type="gene designation" value="CTSS"/>
</dbReference>
<dbReference type="HPA" id="ENSG00000163131">
    <property type="expression patterns" value="Tissue enhanced (bone marrow, lymphoid tissue)"/>
</dbReference>
<dbReference type="MIM" id="116845">
    <property type="type" value="gene"/>
</dbReference>
<dbReference type="neXtProt" id="NX_P25774"/>
<dbReference type="OpenTargets" id="ENSG00000163131"/>
<dbReference type="PharmGKB" id="PA27041"/>
<dbReference type="VEuPathDB" id="HostDB:ENSG00000163131"/>
<dbReference type="eggNOG" id="KOG1543">
    <property type="taxonomic scope" value="Eukaryota"/>
</dbReference>
<dbReference type="GeneTree" id="ENSGT00940000155176"/>
<dbReference type="HOGENOM" id="CLU_012184_1_2_1"/>
<dbReference type="InParanoid" id="P25774"/>
<dbReference type="OMA" id="KSNPNQM"/>
<dbReference type="OrthoDB" id="190265at2759"/>
<dbReference type="PAN-GO" id="P25774">
    <property type="GO annotations" value="5 GO annotations based on evolutionary models"/>
</dbReference>
<dbReference type="PhylomeDB" id="P25774"/>
<dbReference type="TreeFam" id="TF313739"/>
<dbReference type="BRENDA" id="3.4.22.27">
    <property type="organism ID" value="2681"/>
</dbReference>
<dbReference type="PathwayCommons" id="P25774"/>
<dbReference type="Reactome" id="R-HSA-1236977">
    <property type="pathway name" value="Endosomal/Vacuolar pathway"/>
</dbReference>
<dbReference type="Reactome" id="R-HSA-1474228">
    <property type="pathway name" value="Degradation of the extracellular matrix"/>
</dbReference>
<dbReference type="Reactome" id="R-HSA-1679131">
    <property type="pathway name" value="Trafficking and processing of endosomal TLR"/>
</dbReference>
<dbReference type="Reactome" id="R-HSA-2022090">
    <property type="pathway name" value="Assembly of collagen fibrils and other multimeric structures"/>
</dbReference>
<dbReference type="Reactome" id="R-HSA-2132295">
    <property type="pathway name" value="MHC class II antigen presentation"/>
</dbReference>
<dbReference type="Reactome" id="R-HSA-6798695">
    <property type="pathway name" value="Neutrophil degranulation"/>
</dbReference>
<dbReference type="SignaLink" id="P25774"/>
<dbReference type="SIGNOR" id="P25774"/>
<dbReference type="BioGRID-ORCS" id="1520">
    <property type="hits" value="8 hits in 1163 CRISPR screens"/>
</dbReference>
<dbReference type="ChiTaRS" id="CTSS">
    <property type="organism name" value="human"/>
</dbReference>
<dbReference type="EvolutionaryTrace" id="P25774"/>
<dbReference type="GeneWiki" id="Cathepsin_S"/>
<dbReference type="GenomeRNAi" id="1520"/>
<dbReference type="Pharos" id="P25774">
    <property type="development level" value="Tchem"/>
</dbReference>
<dbReference type="PRO" id="PR:P25774"/>
<dbReference type="Proteomes" id="UP000005640">
    <property type="component" value="Chromosome 1"/>
</dbReference>
<dbReference type="RNAct" id="P25774">
    <property type="molecule type" value="protein"/>
</dbReference>
<dbReference type="Bgee" id="ENSG00000163131">
    <property type="expression patterns" value="Expressed in monocyte and 182 other cell types or tissues"/>
</dbReference>
<dbReference type="ExpressionAtlas" id="P25774">
    <property type="expression patterns" value="baseline and differential"/>
</dbReference>
<dbReference type="GO" id="GO:0062023">
    <property type="term" value="C:collagen-containing extracellular matrix"/>
    <property type="evidence" value="ECO:0007005"/>
    <property type="project" value="BHF-UCL"/>
</dbReference>
<dbReference type="GO" id="GO:0036021">
    <property type="term" value="C:endolysosome lumen"/>
    <property type="evidence" value="ECO:0000304"/>
    <property type="project" value="Reactome"/>
</dbReference>
<dbReference type="GO" id="GO:0005576">
    <property type="term" value="C:extracellular region"/>
    <property type="evidence" value="ECO:0000304"/>
    <property type="project" value="Reactome"/>
</dbReference>
<dbReference type="GO" id="GO:0005615">
    <property type="term" value="C:extracellular space"/>
    <property type="evidence" value="ECO:0000314"/>
    <property type="project" value="UniProtKB"/>
</dbReference>
<dbReference type="GO" id="GO:1904813">
    <property type="term" value="C:ficolin-1-rich granule lumen"/>
    <property type="evidence" value="ECO:0000304"/>
    <property type="project" value="Reactome"/>
</dbReference>
<dbReference type="GO" id="GO:0043231">
    <property type="term" value="C:intracellular membrane-bounded organelle"/>
    <property type="evidence" value="ECO:0000314"/>
    <property type="project" value="HPA"/>
</dbReference>
<dbReference type="GO" id="GO:0005770">
    <property type="term" value="C:late endosome"/>
    <property type="evidence" value="ECO:0000314"/>
    <property type="project" value="ARUK-UCL"/>
</dbReference>
<dbReference type="GO" id="GO:0043202">
    <property type="term" value="C:lysosomal lumen"/>
    <property type="evidence" value="ECO:0000304"/>
    <property type="project" value="Reactome"/>
</dbReference>
<dbReference type="GO" id="GO:0005764">
    <property type="term" value="C:lysosome"/>
    <property type="evidence" value="ECO:0000314"/>
    <property type="project" value="UniProtKB"/>
</dbReference>
<dbReference type="GO" id="GO:0045335">
    <property type="term" value="C:phagocytic vesicle"/>
    <property type="evidence" value="ECO:0000314"/>
    <property type="project" value="UniProtKB"/>
</dbReference>
<dbReference type="GO" id="GO:1904724">
    <property type="term" value="C:tertiary granule lumen"/>
    <property type="evidence" value="ECO:0000304"/>
    <property type="project" value="Reactome"/>
</dbReference>
<dbReference type="GO" id="GO:0005518">
    <property type="term" value="F:collagen binding"/>
    <property type="evidence" value="ECO:0000314"/>
    <property type="project" value="BHF-UCL"/>
</dbReference>
<dbReference type="GO" id="GO:0004197">
    <property type="term" value="F:cysteine-type endopeptidase activity"/>
    <property type="evidence" value="ECO:0000314"/>
    <property type="project" value="CAFA"/>
</dbReference>
<dbReference type="GO" id="GO:0008234">
    <property type="term" value="F:cysteine-type peptidase activity"/>
    <property type="evidence" value="ECO:0000314"/>
    <property type="project" value="ARUK-UCL"/>
</dbReference>
<dbReference type="GO" id="GO:0001968">
    <property type="term" value="F:fibronectin binding"/>
    <property type="evidence" value="ECO:0000353"/>
    <property type="project" value="BHF-UCL"/>
</dbReference>
<dbReference type="GO" id="GO:0043236">
    <property type="term" value="F:laminin binding"/>
    <property type="evidence" value="ECO:0000314"/>
    <property type="project" value="BHF-UCL"/>
</dbReference>
<dbReference type="GO" id="GO:0043394">
    <property type="term" value="F:proteoglycan binding"/>
    <property type="evidence" value="ECO:0000353"/>
    <property type="project" value="BHF-UCL"/>
</dbReference>
<dbReference type="GO" id="GO:0004252">
    <property type="term" value="F:serine-type endopeptidase activity"/>
    <property type="evidence" value="ECO:0000304"/>
    <property type="project" value="Reactome"/>
</dbReference>
<dbReference type="GO" id="GO:0002250">
    <property type="term" value="P:adaptive immune response"/>
    <property type="evidence" value="ECO:0000270"/>
    <property type="project" value="UniProtKB"/>
</dbReference>
<dbReference type="GO" id="GO:0019882">
    <property type="term" value="P:antigen processing and presentation"/>
    <property type="evidence" value="ECO:0000304"/>
    <property type="project" value="UniProtKB"/>
</dbReference>
<dbReference type="GO" id="GO:0019886">
    <property type="term" value="P:antigen processing and presentation of exogenous peptide antigen via MHC class II"/>
    <property type="evidence" value="ECO:0000314"/>
    <property type="project" value="UniProtKB"/>
</dbReference>
<dbReference type="GO" id="GO:0048002">
    <property type="term" value="P:antigen processing and presentation of peptide antigen"/>
    <property type="evidence" value="ECO:0000314"/>
    <property type="project" value="CACAO"/>
</dbReference>
<dbReference type="GO" id="GO:0034769">
    <property type="term" value="P:basement membrane disassembly"/>
    <property type="evidence" value="ECO:0000314"/>
    <property type="project" value="BHF-UCL"/>
</dbReference>
<dbReference type="GO" id="GO:0097067">
    <property type="term" value="P:cellular response to thyroid hormone stimulus"/>
    <property type="evidence" value="ECO:0000270"/>
    <property type="project" value="UniProtKB"/>
</dbReference>
<dbReference type="GO" id="GO:0030574">
    <property type="term" value="P:collagen catabolic process"/>
    <property type="evidence" value="ECO:0000314"/>
    <property type="project" value="BHF-UCL"/>
</dbReference>
<dbReference type="GO" id="GO:0022617">
    <property type="term" value="P:extracellular matrix disassembly"/>
    <property type="evidence" value="ECO:0000304"/>
    <property type="project" value="Reactome"/>
</dbReference>
<dbReference type="GO" id="GO:0006955">
    <property type="term" value="P:immune response"/>
    <property type="evidence" value="ECO:0000304"/>
    <property type="project" value="ProtInc"/>
</dbReference>
<dbReference type="GO" id="GO:2001259">
    <property type="term" value="P:positive regulation of cation channel activity"/>
    <property type="evidence" value="ECO:0000314"/>
    <property type="project" value="CACAO"/>
</dbReference>
<dbReference type="GO" id="GO:0016485">
    <property type="term" value="P:protein processing"/>
    <property type="evidence" value="ECO:0000314"/>
    <property type="project" value="CACAO"/>
</dbReference>
<dbReference type="GO" id="GO:0006508">
    <property type="term" value="P:proteolysis"/>
    <property type="evidence" value="ECO:0000314"/>
    <property type="project" value="CAFA"/>
</dbReference>
<dbReference type="GO" id="GO:0051603">
    <property type="term" value="P:proteolysis involved in protein catabolic process"/>
    <property type="evidence" value="ECO:0000314"/>
    <property type="project" value="BHF-UCL"/>
</dbReference>
<dbReference type="GO" id="GO:0002577">
    <property type="term" value="P:regulation of antigen processing and presentation"/>
    <property type="evidence" value="ECO:0000314"/>
    <property type="project" value="ARUK-UCL"/>
</dbReference>
<dbReference type="GO" id="GO:0010447">
    <property type="term" value="P:response to acidic pH"/>
    <property type="evidence" value="ECO:0000314"/>
    <property type="project" value="CACAO"/>
</dbReference>
<dbReference type="GO" id="GO:0002224">
    <property type="term" value="P:toll-like receptor signaling pathway"/>
    <property type="evidence" value="ECO:0000304"/>
    <property type="project" value="Reactome"/>
</dbReference>
<dbReference type="CDD" id="cd02248">
    <property type="entry name" value="Peptidase_C1A"/>
    <property type="match status" value="1"/>
</dbReference>
<dbReference type="FunFam" id="3.90.70.10:FF:000006">
    <property type="entry name" value="Cathepsin S"/>
    <property type="match status" value="1"/>
</dbReference>
<dbReference type="Gene3D" id="3.90.70.10">
    <property type="entry name" value="Cysteine proteinases"/>
    <property type="match status" value="1"/>
</dbReference>
<dbReference type="InterPro" id="IPR038765">
    <property type="entry name" value="Papain-like_cys_pep_sf"/>
</dbReference>
<dbReference type="InterPro" id="IPR025661">
    <property type="entry name" value="Pept_asp_AS"/>
</dbReference>
<dbReference type="InterPro" id="IPR000169">
    <property type="entry name" value="Pept_cys_AS"/>
</dbReference>
<dbReference type="InterPro" id="IPR025660">
    <property type="entry name" value="Pept_his_AS"/>
</dbReference>
<dbReference type="InterPro" id="IPR013128">
    <property type="entry name" value="Peptidase_C1A"/>
</dbReference>
<dbReference type="InterPro" id="IPR000668">
    <property type="entry name" value="Peptidase_C1A_C"/>
</dbReference>
<dbReference type="InterPro" id="IPR039417">
    <property type="entry name" value="Peptidase_C1A_papain-like"/>
</dbReference>
<dbReference type="InterPro" id="IPR013201">
    <property type="entry name" value="Prot_inhib_I29"/>
</dbReference>
<dbReference type="PANTHER" id="PTHR12411">
    <property type="entry name" value="CYSTEINE PROTEASE FAMILY C1-RELATED"/>
    <property type="match status" value="1"/>
</dbReference>
<dbReference type="Pfam" id="PF08246">
    <property type="entry name" value="Inhibitor_I29"/>
    <property type="match status" value="1"/>
</dbReference>
<dbReference type="Pfam" id="PF00112">
    <property type="entry name" value="Peptidase_C1"/>
    <property type="match status" value="1"/>
</dbReference>
<dbReference type="PRINTS" id="PR00705">
    <property type="entry name" value="PAPAIN"/>
</dbReference>
<dbReference type="SMART" id="SM00848">
    <property type="entry name" value="Inhibitor_I29"/>
    <property type="match status" value="1"/>
</dbReference>
<dbReference type="SMART" id="SM00645">
    <property type="entry name" value="Pept_C1"/>
    <property type="match status" value="1"/>
</dbReference>
<dbReference type="SUPFAM" id="SSF54001">
    <property type="entry name" value="Cysteine proteinases"/>
    <property type="match status" value="1"/>
</dbReference>
<dbReference type="PROSITE" id="PS00640">
    <property type="entry name" value="THIOL_PROTEASE_ASN"/>
    <property type="match status" value="1"/>
</dbReference>
<dbReference type="PROSITE" id="PS00139">
    <property type="entry name" value="THIOL_PROTEASE_CYS"/>
    <property type="match status" value="1"/>
</dbReference>
<dbReference type="PROSITE" id="PS00639">
    <property type="entry name" value="THIOL_PROTEASE_HIS"/>
    <property type="match status" value="1"/>
</dbReference>
<gene>
    <name type="primary">CTSS</name>
</gene>
<organism>
    <name type="scientific">Homo sapiens</name>
    <name type="common">Human</name>
    <dbReference type="NCBI Taxonomy" id="9606"/>
    <lineage>
        <taxon>Eukaryota</taxon>
        <taxon>Metazoa</taxon>
        <taxon>Chordata</taxon>
        <taxon>Craniata</taxon>
        <taxon>Vertebrata</taxon>
        <taxon>Euteleostomi</taxon>
        <taxon>Mammalia</taxon>
        <taxon>Eutheria</taxon>
        <taxon>Euarchontoglires</taxon>
        <taxon>Primates</taxon>
        <taxon>Haplorrhini</taxon>
        <taxon>Catarrhini</taxon>
        <taxon>Hominidae</taxon>
        <taxon>Homo</taxon>
    </lineage>
</organism>
<comment type="function">
    <text evidence="11">Thiol protease. Key protease responsible for the removal of the invariant chain from MHC class II molecules and MHC class II antigen presentation (PubMed:30612035). The bond-specificity of this proteinase is in part similar to the specificities of cathepsin L.</text>
</comment>
<comment type="catalytic activity">
    <reaction>
        <text>Similar to cathepsin L, but with much less activity on Z-Phe-Arg-|-NHMec, and more activity on the Z-Val-Val-Arg-|-Xaa compound.</text>
        <dbReference type="EC" id="3.4.22.27"/>
    </reaction>
</comment>
<comment type="subunit">
    <text evidence="10">Monomer.</text>
</comment>
<comment type="subcellular location">
    <subcellularLocation>
        <location evidence="7">Lysosome</location>
    </subcellularLocation>
    <subcellularLocation>
        <location evidence="13">Secreted</location>
    </subcellularLocation>
    <subcellularLocation>
        <location evidence="11">Cytoplasmic vesicle</location>
        <location evidence="11">Phagosome</location>
    </subcellularLocation>
</comment>
<comment type="alternative products">
    <event type="alternative splicing"/>
    <isoform>
        <id>P25774-1</id>
        <name>1</name>
        <sequence type="displayed"/>
    </isoform>
    <isoform>
        <id>P25774-2</id>
        <name>2</name>
        <sequence type="described" ref="VSP_042712"/>
    </isoform>
</comment>
<comment type="similarity">
    <text evidence="3 4 5">Belongs to the peptidase C1 family.</text>
</comment>
<sequence>MKRLVCVLLVCSSAVAQLHKDPTLDHHWHLWKKTYGKQYKEKNEEAVRRLIWEKNLKFVMLHNLEHSMGMHSYDLGMNHLGDMTSEEVMSLMSSLRVPSQWQRNITYKSNPNRILPDSVDWREKGCVTEVKYQGSCGACWAFSAVGALEAQLKLKTGKLVSLSAQNLVDCSTEKYGNKGCNGGFMTTAFQYIIDNKGIDSDASYPYKAMDQKCQYDSKYRAATCSKYTELPYGREDVLKEAVANKGPVSVGVDARHPSFFLYRSGVYYEPSCTQNVNHGVLVVGYGDLNGKEYWLVKNSWGHNFGEEGYIRMARNKGNHCGIASFPSYPEI</sequence>